<proteinExistence type="evidence at protein level"/>
<keyword id="KW-0010">Activator</keyword>
<keyword id="KW-0217">Developmental protein</keyword>
<keyword id="KW-0221">Differentiation</keyword>
<keyword id="KW-0238">DNA-binding</keyword>
<keyword id="KW-0524">Neurogenesis</keyword>
<keyword id="KW-0539">Nucleus</keyword>
<keyword id="KW-1185">Reference proteome</keyword>
<keyword id="KW-0804">Transcription</keyword>
<keyword id="KW-0805">Transcription regulation</keyword>
<name>SOX2_XENLA</name>
<organism>
    <name type="scientific">Xenopus laevis</name>
    <name type="common">African clawed frog</name>
    <dbReference type="NCBI Taxonomy" id="8355"/>
    <lineage>
        <taxon>Eukaryota</taxon>
        <taxon>Metazoa</taxon>
        <taxon>Chordata</taxon>
        <taxon>Craniata</taxon>
        <taxon>Vertebrata</taxon>
        <taxon>Euteleostomi</taxon>
        <taxon>Amphibia</taxon>
        <taxon>Batrachia</taxon>
        <taxon>Anura</taxon>
        <taxon>Pipoidea</taxon>
        <taxon>Pipidae</taxon>
        <taxon>Xenopodinae</taxon>
        <taxon>Xenopus</taxon>
        <taxon>Xenopus</taxon>
    </lineage>
</organism>
<protein>
    <recommendedName>
        <fullName>Transcription factor Sox-2</fullName>
        <shortName>XSox2</shortName>
        <shortName>XlSox-2</shortName>
    </recommendedName>
    <alternativeName>
        <fullName>SRY (sex determining region Y)-box 2</fullName>
    </alternativeName>
</protein>
<accession>O42569</accession>
<accession>O73690</accession>
<accession>Q6DFL8</accession>
<gene>
    <name type="primary">sox2</name>
</gene>
<reference key="1">
    <citation type="journal article" date="1997" name="Cold Spring Harb. Symp. Quant. Biol.">
        <title>Patterning by genes expressed in Spemann's organizer.</title>
        <authorList>
            <person name="De Robertis E.M."/>
            <person name="Kim S."/>
            <person name="Leyns L."/>
            <person name="Piccolo S."/>
            <person name="Bachiller D."/>
            <person name="Agius E."/>
            <person name="Belo J.A."/>
            <person name="Yamamoto A."/>
            <person name="Hainski-Brousseau A."/>
            <person name="Brizuela B."/>
            <person name="Wessely O."/>
            <person name="Lu B."/>
            <person name="Bouwmeester T."/>
        </authorList>
    </citation>
    <scope>NUCLEOTIDE SEQUENCE [MRNA]</scope>
    <scope>TISSUE SPECIFICITY</scope>
    <source>
        <tissue>Dorsal lip</tissue>
    </source>
</reference>
<reference key="2">
    <citation type="journal article" date="1998" name="Development">
        <title>Xenopus Zic-related-1 and Sox-2, two factors induced by chordin, have distinct activities in the initiation of neural induction.</title>
        <authorList>
            <person name="Mizuseki K."/>
            <person name="Kishi M."/>
            <person name="Matsui M."/>
            <person name="Nakanishi S."/>
            <person name="Sasai Y."/>
        </authorList>
    </citation>
    <scope>NUCLEOTIDE SEQUENCE [MRNA]</scope>
    <scope>FUNCTION</scope>
    <scope>TISSUE SPECIFICITY</scope>
    <scope>DEVELOPMENTAL STAGE</scope>
    <scope>INDUCTION</scope>
</reference>
<reference key="3">
    <citation type="submission" date="2004-07" db="EMBL/GenBank/DDBJ databases">
        <authorList>
            <consortium name="NIH - Xenopus Gene Collection (XGC) project"/>
        </authorList>
    </citation>
    <scope>NUCLEOTIDE SEQUENCE [LARGE SCALE MRNA]</scope>
    <source>
        <tissue>Gastrula</tissue>
    </source>
</reference>
<reference key="4">
    <citation type="journal article" date="2000" name="Development">
        <title>Requirement of Sox2-mediated signaling for differentiation of early Xenopus neuroectoderm.</title>
        <authorList>
            <person name="Kishi M."/>
            <person name="Mizuseki K."/>
            <person name="Sasai N."/>
            <person name="Yamazaki H."/>
            <person name="Shiota K."/>
            <person name="Nakanishi S."/>
            <person name="Sasai Y."/>
        </authorList>
    </citation>
    <scope>FUNCTION</scope>
</reference>
<reference key="5">
    <citation type="journal article" date="2006" name="Biochem. Biophys. Res. Commun.">
        <title>Expression of Sox1 during Xenopus early embryogenesis.</title>
        <authorList>
            <person name="Nitta K.R."/>
            <person name="Takahashi S."/>
            <person name="Haramoto Y."/>
            <person name="Fukuda M."/>
            <person name="Onuma Y."/>
            <person name="Asashima M."/>
        </authorList>
    </citation>
    <scope>TISSUE SPECIFICITY</scope>
    <scope>DEVELOPMENTAL STAGE</scope>
</reference>
<reference key="6">
    <citation type="journal article" date="2007" name="Dong Wu Xue Yan Jiu">
        <title>Temporal and spatial expression patterns of Sox1 gene in Xenopus laevis embryo.</title>
        <authorList>
            <person name="Ma L."/>
            <person name="Zhao S.-H."/>
            <person name="Kong Q.-H."/>
            <person name="Mao B.-Y."/>
        </authorList>
    </citation>
    <scope>TISSUE SPECIFICITY</scope>
    <scope>DEVELOPMENTAL STAGE</scope>
</reference>
<comment type="function">
    <text evidence="1 5 7">Transcriptional activator (By similarity). Functions as a switch in neuronal development, participating in the differentiation of embryonic neuroectodermal cells into neural tissues by making the ectodermal cells responsive to FGF-neuralizing signals. Downstream SRRT target that mediates the promotion of neural stem cell self-renewal (By similarity).</text>
</comment>
<comment type="interaction">
    <interactant intactId="EBI-15695825">
        <id>O42569</id>
    </interactant>
    <interactant intactId="EBI-15695802">
        <id>Q91813</id>
        <label>otx2-a</label>
    </interactant>
    <organismsDiffer>false</organismsDiffer>
    <experiments>5</experiments>
</comment>
<comment type="subcellular location">
    <subcellularLocation>
        <location evidence="3">Nucleus</location>
    </subcellularLocation>
</comment>
<comment type="tissue specificity">
    <text evidence="6 7 8 9">By mid-gastrulation (stage 11), strongly expressed on the dorsal side of the embryo and by stage 13, expression marks the future neural plate including the neural crest. During neurulation, neural precursors showing expression converge to form the central nervous system and eye. At stage 23 (early tailbud), expressed in the primitive brain and optic vesicle, with expression high in the anterior neural tube. In the tail bud brain, expressed in several patches along the anterior-posterior axis in the telencephalon, midbrain-hindbrain boundary and hindbrain. Also expressed in the branchial arches during tailbud stages. In the tailbud eye, expressed in both the neural retina and the lens.</text>
</comment>
<comment type="developmental stage">
    <text evidence="6 7 9">Expressed zygotically from gastrula stage (stage 11). Expression remains constant at later stages.</text>
</comment>
<comment type="induction">
    <text evidence="7">By bmp-antagonism. By chordin.</text>
</comment>
<comment type="domain">
    <text evidence="2">The 9aaTAD motif is a transactivation domain present in a large number of yeast and animal transcription factors.</text>
</comment>
<feature type="chain" id="PRO_0000048719" description="Transcription factor Sox-2">
    <location>
        <begin position="1"/>
        <end position="311"/>
    </location>
</feature>
<feature type="DNA-binding region" description="HMG box" evidence="3">
    <location>
        <begin position="37"/>
        <end position="105"/>
    </location>
</feature>
<feature type="region of interest" description="Disordered" evidence="4">
    <location>
        <begin position="1"/>
        <end position="41"/>
    </location>
</feature>
<feature type="region of interest" description="Disordered" evidence="4">
    <location>
        <begin position="230"/>
        <end position="259"/>
    </location>
</feature>
<feature type="short sequence motif" description="9aaTAD" evidence="2">
    <location>
        <begin position="266"/>
        <end position="274"/>
    </location>
</feature>
<feature type="compositionally biased region" description="Low complexity" evidence="4">
    <location>
        <begin position="18"/>
        <end position="32"/>
    </location>
</feature>
<feature type="compositionally biased region" description="Low complexity" evidence="4">
    <location>
        <begin position="233"/>
        <end position="255"/>
    </location>
</feature>
<feature type="sequence conflict" description="In Ref. 2; AAC14215." evidence="10" ref="2">
    <original>MQEQL</original>
    <variation>IEDDV</variation>
    <location>
        <begin position="168"/>
        <end position="172"/>
    </location>
</feature>
<feature type="sequence conflict" description="In Ref. 2; AAC14215." evidence="10" ref="2">
    <original>Q</original>
    <variation>L</variation>
    <location>
        <position position="189"/>
    </location>
</feature>
<feature type="sequence conflict" description="In Ref. 2; AAC14215." evidence="10" ref="2">
    <original>G</original>
    <variation>R</variation>
    <location>
        <position position="213"/>
    </location>
</feature>
<feature type="sequence conflict" description="In Ref. 3; AAH76717." evidence="10" ref="3">
    <original>A</original>
    <variation>P</variation>
    <location>
        <position position="226"/>
    </location>
</feature>
<evidence type="ECO:0000250" key="1"/>
<evidence type="ECO:0000250" key="2">
    <source>
        <dbReference type="UniProtKB" id="P41225"/>
    </source>
</evidence>
<evidence type="ECO:0000255" key="3">
    <source>
        <dbReference type="PROSITE-ProRule" id="PRU00267"/>
    </source>
</evidence>
<evidence type="ECO:0000256" key="4">
    <source>
        <dbReference type="SAM" id="MobiDB-lite"/>
    </source>
</evidence>
<evidence type="ECO:0000269" key="5">
    <source>
    </source>
</evidence>
<evidence type="ECO:0000269" key="6">
    <source>
    </source>
</evidence>
<evidence type="ECO:0000269" key="7">
    <source>
    </source>
</evidence>
<evidence type="ECO:0000269" key="8">
    <source>
    </source>
</evidence>
<evidence type="ECO:0000269" key="9">
    <source ref="6"/>
</evidence>
<evidence type="ECO:0000305" key="10"/>
<sequence length="311" mass="34106">MYSMMETELKPPAPQQPSGGNSNSASNNQNKNSPDRVKRPMNAFMVWSRGQRRKMAQENPKMHNSEISKRLGAEWKLLSEAEKRPFIDEAKRLRALHMKEHPDYKYRPRRKTKTLMKKDKYTLPGGLLAPGANAMTSGVGGSLGAGVNQRMDTYAHMNGWTNGGYGMMQEQLGYPQHPGLNAHNAPQMQPMHRYDVSALQYNSMSSSQTYMNGSPTYSMSYSQQGAPGMSLGSMGSVVKSESSSSPPVVTSSSHSRAPCQAGDLRDMISMYLPGAEVPESAAQSRLHMSQHYQSASVAGTGINGTLPLSHM</sequence>
<dbReference type="EMBL" id="AF005476">
    <property type="protein sequence ID" value="AAB62821.1"/>
    <property type="molecule type" value="mRNA"/>
</dbReference>
<dbReference type="EMBL" id="AF022928">
    <property type="protein sequence ID" value="AAC14215.1"/>
    <property type="molecule type" value="mRNA"/>
</dbReference>
<dbReference type="EMBL" id="BC076717">
    <property type="protein sequence ID" value="AAH76717.1"/>
    <property type="molecule type" value="mRNA"/>
</dbReference>
<dbReference type="RefSeq" id="NP_001081691.1">
    <property type="nucleotide sequence ID" value="NM_001088222.1"/>
</dbReference>
<dbReference type="RefSeq" id="XP_018121173.1">
    <property type="nucleotide sequence ID" value="XM_018265684.1"/>
</dbReference>
<dbReference type="BMRB" id="O42569"/>
<dbReference type="SMR" id="O42569"/>
<dbReference type="DIP" id="DIP-29886N"/>
<dbReference type="IntAct" id="O42569">
    <property type="interactions" value="1"/>
</dbReference>
<dbReference type="GeneID" id="398000"/>
<dbReference type="KEGG" id="xla:398000"/>
<dbReference type="AGR" id="Xenbase:XB-GENE-865099"/>
<dbReference type="CTD" id="398000"/>
<dbReference type="Xenbase" id="XB-GENE-865099">
    <property type="gene designation" value="sox2.L"/>
</dbReference>
<dbReference type="OrthoDB" id="6247875at2759"/>
<dbReference type="Proteomes" id="UP000186698">
    <property type="component" value="Chromosome 5L"/>
</dbReference>
<dbReference type="Bgee" id="108718087">
    <property type="expression patterns" value="Expressed in neurula embryo and 11 other cell types or tissues"/>
</dbReference>
<dbReference type="GO" id="GO:0005737">
    <property type="term" value="C:cytoplasm"/>
    <property type="evidence" value="ECO:0000250"/>
    <property type="project" value="UniProtKB"/>
</dbReference>
<dbReference type="GO" id="GO:0005634">
    <property type="term" value="C:nucleus"/>
    <property type="evidence" value="ECO:0000250"/>
    <property type="project" value="UniProtKB"/>
</dbReference>
<dbReference type="GO" id="GO:0001228">
    <property type="term" value="F:DNA-binding transcription activator activity, RNA polymerase II-specific"/>
    <property type="evidence" value="ECO:0000318"/>
    <property type="project" value="GO_Central"/>
</dbReference>
<dbReference type="GO" id="GO:0000978">
    <property type="term" value="F:RNA polymerase II cis-regulatory region sequence-specific DNA binding"/>
    <property type="evidence" value="ECO:0000318"/>
    <property type="project" value="GO_Central"/>
</dbReference>
<dbReference type="GO" id="GO:0043565">
    <property type="term" value="F:sequence-specific DNA binding"/>
    <property type="evidence" value="ECO:0000250"/>
    <property type="project" value="UniProtKB"/>
</dbReference>
<dbReference type="GO" id="GO:0007420">
    <property type="term" value="P:brain development"/>
    <property type="evidence" value="ECO:0000318"/>
    <property type="project" value="GO_Central"/>
</dbReference>
<dbReference type="GO" id="GO:0000122">
    <property type="term" value="P:negative regulation of transcription by RNA polymerase II"/>
    <property type="evidence" value="ECO:0000318"/>
    <property type="project" value="GO_Central"/>
</dbReference>
<dbReference type="GO" id="GO:0007399">
    <property type="term" value="P:nervous system development"/>
    <property type="evidence" value="ECO:0000315"/>
    <property type="project" value="UniProtKB"/>
</dbReference>
<dbReference type="GO" id="GO:0030182">
    <property type="term" value="P:neuron differentiation"/>
    <property type="evidence" value="ECO:0000318"/>
    <property type="project" value="GO_Central"/>
</dbReference>
<dbReference type="GO" id="GO:0045893">
    <property type="term" value="P:positive regulation of DNA-templated transcription"/>
    <property type="evidence" value="ECO:0000250"/>
    <property type="project" value="UniProtKB"/>
</dbReference>
<dbReference type="GO" id="GO:0045944">
    <property type="term" value="P:positive regulation of transcription by RNA polymerase II"/>
    <property type="evidence" value="ECO:0000250"/>
    <property type="project" value="UniProtKB"/>
</dbReference>
<dbReference type="CDD" id="cd01388">
    <property type="entry name" value="HMG-box_SoxB"/>
    <property type="match status" value="1"/>
</dbReference>
<dbReference type="FunFam" id="1.10.30.10:FF:000002">
    <property type="entry name" value="transcription factor Sox-2"/>
    <property type="match status" value="1"/>
</dbReference>
<dbReference type="Gene3D" id="1.10.30.10">
    <property type="entry name" value="High mobility group box domain"/>
    <property type="match status" value="1"/>
</dbReference>
<dbReference type="InterPro" id="IPR009071">
    <property type="entry name" value="HMG_box_dom"/>
</dbReference>
<dbReference type="InterPro" id="IPR036910">
    <property type="entry name" value="HMG_box_dom_sf"/>
</dbReference>
<dbReference type="InterPro" id="IPR022097">
    <property type="entry name" value="SOX_fam"/>
</dbReference>
<dbReference type="InterPro" id="IPR050140">
    <property type="entry name" value="SRY-related_HMG-box_TF-like"/>
</dbReference>
<dbReference type="PANTHER" id="PTHR10270">
    <property type="entry name" value="SOX TRANSCRIPTION FACTOR"/>
    <property type="match status" value="1"/>
</dbReference>
<dbReference type="PANTHER" id="PTHR10270:SF231">
    <property type="entry name" value="TRANSCRIPTION FACTOR SOX-2"/>
    <property type="match status" value="1"/>
</dbReference>
<dbReference type="Pfam" id="PF00505">
    <property type="entry name" value="HMG_box"/>
    <property type="match status" value="1"/>
</dbReference>
<dbReference type="Pfam" id="PF12336">
    <property type="entry name" value="SOXp"/>
    <property type="match status" value="1"/>
</dbReference>
<dbReference type="SMART" id="SM00398">
    <property type="entry name" value="HMG"/>
    <property type="match status" value="1"/>
</dbReference>
<dbReference type="SUPFAM" id="SSF47095">
    <property type="entry name" value="HMG-box"/>
    <property type="match status" value="1"/>
</dbReference>
<dbReference type="PROSITE" id="PS50118">
    <property type="entry name" value="HMG_BOX_2"/>
    <property type="match status" value="1"/>
</dbReference>